<accession>P01933</accession>
<gene>
    <name type="primary">HBA</name>
</gene>
<comment type="function">
    <text>Involved in oxygen transport from the lung to the various peripheral tissues.</text>
</comment>
<comment type="function">
    <molecule>Hemopressin</molecule>
    <text evidence="2">Hemopressin acts as an antagonist peptide of the cannabinoid receptor CNR1. Hemopressin-binding efficiently blocks cannabinoid receptor CNR1 and subsequent signaling.</text>
</comment>
<comment type="subunit">
    <text>Heterotetramer of two alpha chains and two beta chains.</text>
</comment>
<comment type="tissue specificity">
    <text>Red blood cells.</text>
</comment>
<comment type="similarity">
    <text evidence="4">Belongs to the globin family.</text>
</comment>
<reference key="1">
    <citation type="book" date="1976" name="Handbook of biochemistry and molecular biology (3rd ed.)">
        <editorList>
            <person name="Fasman G.D."/>
        </editorList>
        <authorList>
            <person name="Yasunobu K.T."/>
            <person name="Tanaka M."/>
        </authorList>
    </citation>
    <scope>PROTEIN SEQUENCE</scope>
</reference>
<sequence>VLSPDDKKHVKAAWGKVGEHAGEYGAEALERMFLSFPTTKTYFPHFNLSHGSDQVKGHGKKVADALTLAVGHVDDMPHALSKLSDLHAHKLRVDPVNFKLLSHCLLVTLAAHLPAEFTPAVHASLDKFLASVSTVLTSKYR</sequence>
<proteinExistence type="evidence at protein level"/>
<evidence type="ECO:0000250" key="1">
    <source>
        <dbReference type="UniProtKB" id="P01942"/>
    </source>
</evidence>
<evidence type="ECO:0000250" key="2">
    <source>
        <dbReference type="UniProtKB" id="P01946"/>
    </source>
</evidence>
<evidence type="ECO:0000250" key="3">
    <source>
        <dbReference type="UniProtKB" id="P69905"/>
    </source>
</evidence>
<evidence type="ECO:0000255" key="4">
    <source>
        <dbReference type="PROSITE-ProRule" id="PRU00238"/>
    </source>
</evidence>
<dbReference type="PIR" id="B04621">
    <property type="entry name" value="HAMKS"/>
</dbReference>
<dbReference type="SMR" id="P01933"/>
<dbReference type="STRING" id="9531.ENSCATP00000001836"/>
<dbReference type="Proteomes" id="UP000233060">
    <property type="component" value="Unassembled WGS sequence"/>
</dbReference>
<dbReference type="GO" id="GO:0072562">
    <property type="term" value="C:blood microparticle"/>
    <property type="evidence" value="ECO:0007669"/>
    <property type="project" value="TreeGrafter"/>
</dbReference>
<dbReference type="GO" id="GO:0031838">
    <property type="term" value="C:haptoglobin-hemoglobin complex"/>
    <property type="evidence" value="ECO:0007669"/>
    <property type="project" value="TreeGrafter"/>
</dbReference>
<dbReference type="GO" id="GO:0005833">
    <property type="term" value="C:hemoglobin complex"/>
    <property type="evidence" value="ECO:0007669"/>
    <property type="project" value="InterPro"/>
</dbReference>
<dbReference type="GO" id="GO:0031720">
    <property type="term" value="F:haptoglobin binding"/>
    <property type="evidence" value="ECO:0007669"/>
    <property type="project" value="TreeGrafter"/>
</dbReference>
<dbReference type="GO" id="GO:0020037">
    <property type="term" value="F:heme binding"/>
    <property type="evidence" value="ECO:0007669"/>
    <property type="project" value="InterPro"/>
</dbReference>
<dbReference type="GO" id="GO:0005506">
    <property type="term" value="F:iron ion binding"/>
    <property type="evidence" value="ECO:0007669"/>
    <property type="project" value="InterPro"/>
</dbReference>
<dbReference type="GO" id="GO:0043177">
    <property type="term" value="F:organic acid binding"/>
    <property type="evidence" value="ECO:0007669"/>
    <property type="project" value="TreeGrafter"/>
</dbReference>
<dbReference type="GO" id="GO:0019825">
    <property type="term" value="F:oxygen binding"/>
    <property type="evidence" value="ECO:0007669"/>
    <property type="project" value="InterPro"/>
</dbReference>
<dbReference type="GO" id="GO:0005344">
    <property type="term" value="F:oxygen carrier activity"/>
    <property type="evidence" value="ECO:0007669"/>
    <property type="project" value="UniProtKB-KW"/>
</dbReference>
<dbReference type="GO" id="GO:0004601">
    <property type="term" value="F:peroxidase activity"/>
    <property type="evidence" value="ECO:0007669"/>
    <property type="project" value="TreeGrafter"/>
</dbReference>
<dbReference type="GO" id="GO:0042744">
    <property type="term" value="P:hydrogen peroxide catabolic process"/>
    <property type="evidence" value="ECO:0007669"/>
    <property type="project" value="TreeGrafter"/>
</dbReference>
<dbReference type="CDD" id="cd08927">
    <property type="entry name" value="Hb-alpha-like"/>
    <property type="match status" value="1"/>
</dbReference>
<dbReference type="FunFam" id="1.10.490.10:FF:000002">
    <property type="entry name" value="Hemoglobin subunit alpha"/>
    <property type="match status" value="1"/>
</dbReference>
<dbReference type="Gene3D" id="1.10.490.10">
    <property type="entry name" value="Globins"/>
    <property type="match status" value="1"/>
</dbReference>
<dbReference type="InterPro" id="IPR000971">
    <property type="entry name" value="Globin"/>
</dbReference>
<dbReference type="InterPro" id="IPR009050">
    <property type="entry name" value="Globin-like_sf"/>
</dbReference>
<dbReference type="InterPro" id="IPR012292">
    <property type="entry name" value="Globin/Proto"/>
</dbReference>
<dbReference type="InterPro" id="IPR002338">
    <property type="entry name" value="Hemoglobin_a-typ"/>
</dbReference>
<dbReference type="InterPro" id="IPR050056">
    <property type="entry name" value="Hemoglobin_oxygen_transport"/>
</dbReference>
<dbReference type="InterPro" id="IPR002339">
    <property type="entry name" value="Hemoglobin_pi"/>
</dbReference>
<dbReference type="PANTHER" id="PTHR11442">
    <property type="entry name" value="HEMOGLOBIN FAMILY MEMBER"/>
    <property type="match status" value="1"/>
</dbReference>
<dbReference type="PANTHER" id="PTHR11442:SF48">
    <property type="entry name" value="HEMOGLOBIN SUBUNIT ALPHA"/>
    <property type="match status" value="1"/>
</dbReference>
<dbReference type="Pfam" id="PF00042">
    <property type="entry name" value="Globin"/>
    <property type="match status" value="1"/>
</dbReference>
<dbReference type="PRINTS" id="PR00612">
    <property type="entry name" value="ALPHAHAEM"/>
</dbReference>
<dbReference type="PRINTS" id="PR00815">
    <property type="entry name" value="PIHAEM"/>
</dbReference>
<dbReference type="SUPFAM" id="SSF46458">
    <property type="entry name" value="Globin-like"/>
    <property type="match status" value="1"/>
</dbReference>
<dbReference type="PROSITE" id="PS01033">
    <property type="entry name" value="GLOBIN"/>
    <property type="match status" value="1"/>
</dbReference>
<protein>
    <recommendedName>
        <fullName>Hemoglobin subunit alpha</fullName>
    </recommendedName>
    <alternativeName>
        <fullName>Alpha-globin</fullName>
    </alternativeName>
    <alternativeName>
        <fullName>Hemoglobin alpha chain</fullName>
    </alternativeName>
    <component>
        <recommendedName>
            <fullName evidence="2">Hemopressin</fullName>
        </recommendedName>
    </component>
</protein>
<feature type="chain" id="PRO_0000052596" description="Hemoglobin subunit alpha">
    <location>
        <begin position="1"/>
        <end position="141"/>
    </location>
</feature>
<feature type="peptide" id="PRO_0000455856" description="Hemopressin" evidence="2">
    <location>
        <begin position="95"/>
        <end position="103"/>
    </location>
</feature>
<feature type="domain" description="Globin" evidence="4">
    <location>
        <begin position="1"/>
        <end position="141"/>
    </location>
</feature>
<feature type="binding site" evidence="4">
    <location>
        <position position="58"/>
    </location>
    <ligand>
        <name>O2</name>
        <dbReference type="ChEBI" id="CHEBI:15379"/>
    </ligand>
</feature>
<feature type="binding site" description="proximal binding residue" evidence="4">
    <location>
        <position position="87"/>
    </location>
    <ligand>
        <name>heme b</name>
        <dbReference type="ChEBI" id="CHEBI:60344"/>
    </ligand>
    <ligandPart>
        <name>Fe</name>
        <dbReference type="ChEBI" id="CHEBI:18248"/>
    </ligandPart>
</feature>
<feature type="modified residue" description="Phosphoserine" evidence="3">
    <location>
        <position position="3"/>
    </location>
</feature>
<feature type="modified residue" description="N6-succinyllysine" evidence="1">
    <location>
        <position position="7"/>
    </location>
</feature>
<feature type="modified residue" description="N6-succinyllysine" evidence="1">
    <location>
        <position position="11"/>
    </location>
</feature>
<feature type="modified residue" description="N6-acetyllysine; alternate" evidence="3">
    <location>
        <position position="16"/>
    </location>
</feature>
<feature type="modified residue" description="N6-succinyllysine; alternate" evidence="1">
    <location>
        <position position="16"/>
    </location>
</feature>
<feature type="modified residue" description="Phosphotyrosine" evidence="3">
    <location>
        <position position="24"/>
    </location>
</feature>
<feature type="modified residue" description="Phosphoserine" evidence="3">
    <location>
        <position position="35"/>
    </location>
</feature>
<feature type="modified residue" description="N6-succinyllysine" evidence="1">
    <location>
        <position position="40"/>
    </location>
</feature>
<feature type="modified residue" description="Phosphoserine" evidence="3">
    <location>
        <position position="49"/>
    </location>
</feature>
<feature type="modified residue" description="Phosphoserine" evidence="1">
    <location>
        <position position="102"/>
    </location>
</feature>
<feature type="modified residue" description="Phosphothreonine" evidence="1">
    <location>
        <position position="108"/>
    </location>
</feature>
<feature type="modified residue" description="Phosphoserine" evidence="1">
    <location>
        <position position="124"/>
    </location>
</feature>
<feature type="modified residue" description="Phosphoserine" evidence="1">
    <location>
        <position position="131"/>
    </location>
</feature>
<feature type="modified residue" description="Phosphothreonine" evidence="1">
    <location>
        <position position="134"/>
    </location>
</feature>
<feature type="modified residue" description="Phosphothreonine" evidence="1">
    <location>
        <position position="137"/>
    </location>
</feature>
<feature type="modified residue" description="Phosphoserine" evidence="1">
    <location>
        <position position="138"/>
    </location>
</feature>
<name>HBA_CERAT</name>
<organism>
    <name type="scientific">Cercocebus atys</name>
    <name type="common">Sooty mangabey</name>
    <name type="synonym">Cercocebus torquatus atys</name>
    <dbReference type="NCBI Taxonomy" id="9531"/>
    <lineage>
        <taxon>Eukaryota</taxon>
        <taxon>Metazoa</taxon>
        <taxon>Chordata</taxon>
        <taxon>Craniata</taxon>
        <taxon>Vertebrata</taxon>
        <taxon>Euteleostomi</taxon>
        <taxon>Mammalia</taxon>
        <taxon>Eutheria</taxon>
        <taxon>Euarchontoglires</taxon>
        <taxon>Primates</taxon>
        <taxon>Haplorrhini</taxon>
        <taxon>Catarrhini</taxon>
        <taxon>Cercopithecidae</taxon>
        <taxon>Cercopithecinae</taxon>
        <taxon>Cercocebus</taxon>
    </lineage>
</organism>
<keyword id="KW-0007">Acetylation</keyword>
<keyword id="KW-0903">Direct protein sequencing</keyword>
<keyword id="KW-0349">Heme</keyword>
<keyword id="KW-0408">Iron</keyword>
<keyword id="KW-0479">Metal-binding</keyword>
<keyword id="KW-0561">Oxygen transport</keyword>
<keyword id="KW-0597">Phosphoprotein</keyword>
<keyword id="KW-1185">Reference proteome</keyword>
<keyword id="KW-0813">Transport</keyword>